<proteinExistence type="inferred from homology"/>
<name>DSBB_VIBCH</name>
<sequence>MRILSSLKTFSQSRLSWLLLLAFVVFFTLCAMYFQHVMLLAPCVMCIYERIAMLGIGVAALIGAIAPQNPVVRWLGFAAWGASSYKGLMLAIEHVNYQFNPSPFATCDLFVTFPAWAPLNQWAPNLFEAYGDCSKVVWQFLTLSMPQWLVVIFAANLLALAIFVVAQLAKTSR</sequence>
<keyword id="KW-0997">Cell inner membrane</keyword>
<keyword id="KW-1003">Cell membrane</keyword>
<keyword id="KW-0143">Chaperone</keyword>
<keyword id="KW-1015">Disulfide bond</keyword>
<keyword id="KW-0249">Electron transport</keyword>
<keyword id="KW-0472">Membrane</keyword>
<keyword id="KW-0560">Oxidoreductase</keyword>
<keyword id="KW-0676">Redox-active center</keyword>
<keyword id="KW-1185">Reference proteome</keyword>
<keyword id="KW-0812">Transmembrane</keyword>
<keyword id="KW-1133">Transmembrane helix</keyword>
<keyword id="KW-0813">Transport</keyword>
<organism>
    <name type="scientific">Vibrio cholerae serotype O1 (strain ATCC 39315 / El Tor Inaba N16961)</name>
    <dbReference type="NCBI Taxonomy" id="243277"/>
    <lineage>
        <taxon>Bacteria</taxon>
        <taxon>Pseudomonadati</taxon>
        <taxon>Pseudomonadota</taxon>
        <taxon>Gammaproteobacteria</taxon>
        <taxon>Vibrionales</taxon>
        <taxon>Vibrionaceae</taxon>
        <taxon>Vibrio</taxon>
    </lineage>
</organism>
<dbReference type="EMBL" id="AE003852">
    <property type="protein sequence ID" value="AAF95050.1"/>
    <property type="molecule type" value="Genomic_DNA"/>
</dbReference>
<dbReference type="PIR" id="H82141">
    <property type="entry name" value="H82141"/>
</dbReference>
<dbReference type="RefSeq" id="NP_231536.1">
    <property type="nucleotide sequence ID" value="NC_002505.1"/>
</dbReference>
<dbReference type="RefSeq" id="WP_001221803.1">
    <property type="nucleotide sequence ID" value="NZ_LT906614.1"/>
</dbReference>
<dbReference type="SMR" id="Q9KQU6"/>
<dbReference type="STRING" id="243277.VC_1902"/>
<dbReference type="DNASU" id="2613531"/>
<dbReference type="EnsemblBacteria" id="AAF95050">
    <property type="protein sequence ID" value="AAF95050"/>
    <property type="gene ID" value="VC_1902"/>
</dbReference>
<dbReference type="GeneID" id="88782727"/>
<dbReference type="KEGG" id="vch:VC_1902"/>
<dbReference type="PATRIC" id="fig|243277.26.peg.1818"/>
<dbReference type="eggNOG" id="COG1495">
    <property type="taxonomic scope" value="Bacteria"/>
</dbReference>
<dbReference type="HOGENOM" id="CLU_098660_2_0_6"/>
<dbReference type="Proteomes" id="UP000000584">
    <property type="component" value="Chromosome 1"/>
</dbReference>
<dbReference type="GO" id="GO:0005886">
    <property type="term" value="C:plasma membrane"/>
    <property type="evidence" value="ECO:0007669"/>
    <property type="project" value="UniProtKB-SubCell"/>
</dbReference>
<dbReference type="GO" id="GO:0009055">
    <property type="term" value="F:electron transfer activity"/>
    <property type="evidence" value="ECO:0007669"/>
    <property type="project" value="UniProtKB-UniRule"/>
</dbReference>
<dbReference type="GO" id="GO:0015035">
    <property type="term" value="F:protein-disulfide reductase activity"/>
    <property type="evidence" value="ECO:0000318"/>
    <property type="project" value="GO_Central"/>
</dbReference>
<dbReference type="GO" id="GO:0006457">
    <property type="term" value="P:protein folding"/>
    <property type="evidence" value="ECO:0000318"/>
    <property type="project" value="GO_Central"/>
</dbReference>
<dbReference type="Gene3D" id="1.20.1550.10">
    <property type="entry name" value="DsbB-like"/>
    <property type="match status" value="1"/>
</dbReference>
<dbReference type="HAMAP" id="MF_00286">
    <property type="entry name" value="DsbB"/>
    <property type="match status" value="1"/>
</dbReference>
<dbReference type="InterPro" id="IPR003752">
    <property type="entry name" value="DiS_bond_form_DsbB/BdbC"/>
</dbReference>
<dbReference type="InterPro" id="IPR022920">
    <property type="entry name" value="Disulphide_bond_form_DsbB"/>
</dbReference>
<dbReference type="InterPro" id="IPR050183">
    <property type="entry name" value="DsbB"/>
</dbReference>
<dbReference type="InterPro" id="IPR023380">
    <property type="entry name" value="DsbB-like_sf"/>
</dbReference>
<dbReference type="NCBIfam" id="NF002485">
    <property type="entry name" value="PRK01749.1"/>
    <property type="match status" value="1"/>
</dbReference>
<dbReference type="PANTHER" id="PTHR36570">
    <property type="entry name" value="DISULFIDE BOND FORMATION PROTEIN B"/>
    <property type="match status" value="1"/>
</dbReference>
<dbReference type="PANTHER" id="PTHR36570:SF2">
    <property type="entry name" value="DISULFIDE BOND FORMATION PROTEIN B"/>
    <property type="match status" value="1"/>
</dbReference>
<dbReference type="Pfam" id="PF02600">
    <property type="entry name" value="DsbB"/>
    <property type="match status" value="1"/>
</dbReference>
<dbReference type="SUPFAM" id="SSF158442">
    <property type="entry name" value="DsbB-like"/>
    <property type="match status" value="1"/>
</dbReference>
<comment type="function">
    <text evidence="1">Required for disulfide bond formation in some periplasmic proteins. Acts by oxidizing the DsbA protein.</text>
</comment>
<comment type="subcellular location">
    <subcellularLocation>
        <location evidence="1">Cell inner membrane</location>
        <topology evidence="1">Multi-pass membrane protein</topology>
    </subcellularLocation>
</comment>
<comment type="similarity">
    <text evidence="1">Belongs to the DsbB family.</text>
</comment>
<accession>Q9KQU6</accession>
<reference key="1">
    <citation type="journal article" date="2000" name="Nature">
        <title>DNA sequence of both chromosomes of the cholera pathogen Vibrio cholerae.</title>
        <authorList>
            <person name="Heidelberg J.F."/>
            <person name="Eisen J.A."/>
            <person name="Nelson W.C."/>
            <person name="Clayton R.A."/>
            <person name="Gwinn M.L."/>
            <person name="Dodson R.J."/>
            <person name="Haft D.H."/>
            <person name="Hickey E.K."/>
            <person name="Peterson J.D."/>
            <person name="Umayam L.A."/>
            <person name="Gill S.R."/>
            <person name="Nelson K.E."/>
            <person name="Read T.D."/>
            <person name="Tettelin H."/>
            <person name="Richardson D.L."/>
            <person name="Ermolaeva M.D."/>
            <person name="Vamathevan J.J."/>
            <person name="Bass S."/>
            <person name="Qin H."/>
            <person name="Dragoi I."/>
            <person name="Sellers P."/>
            <person name="McDonald L.A."/>
            <person name="Utterback T.R."/>
            <person name="Fleischmann R.D."/>
            <person name="Nierman W.C."/>
            <person name="White O."/>
            <person name="Salzberg S.L."/>
            <person name="Smith H.O."/>
            <person name="Colwell R.R."/>
            <person name="Mekalanos J.J."/>
            <person name="Venter J.C."/>
            <person name="Fraser C.M."/>
        </authorList>
    </citation>
    <scope>NUCLEOTIDE SEQUENCE [LARGE SCALE GENOMIC DNA]</scope>
    <source>
        <strain>ATCC 39315 / El Tor Inaba N16961</strain>
    </source>
</reference>
<feature type="chain" id="PRO_0000059361" description="Disulfide bond formation protein B">
    <location>
        <begin position="1"/>
        <end position="173"/>
    </location>
</feature>
<feature type="topological domain" description="Cytoplasmic" evidence="1">
    <location>
        <begin position="1"/>
        <end position="16"/>
    </location>
</feature>
<feature type="transmembrane region" description="Helical" evidence="1">
    <location>
        <begin position="17"/>
        <end position="33"/>
    </location>
</feature>
<feature type="topological domain" description="Periplasmic" evidence="1">
    <location>
        <begin position="34"/>
        <end position="51"/>
    </location>
</feature>
<feature type="transmembrane region" description="Helical" evidence="1">
    <location>
        <begin position="52"/>
        <end position="67"/>
    </location>
</feature>
<feature type="topological domain" description="Cytoplasmic" evidence="1">
    <location>
        <begin position="68"/>
        <end position="74"/>
    </location>
</feature>
<feature type="transmembrane region" description="Helical" evidence="1">
    <location>
        <begin position="75"/>
        <end position="92"/>
    </location>
</feature>
<feature type="topological domain" description="Periplasmic" evidence="1">
    <location>
        <begin position="93"/>
        <end position="147"/>
    </location>
</feature>
<feature type="transmembrane region" description="Helical" evidence="1">
    <location>
        <begin position="148"/>
        <end position="166"/>
    </location>
</feature>
<feature type="topological domain" description="Cytoplasmic" evidence="1">
    <location>
        <begin position="167"/>
        <end position="173"/>
    </location>
</feature>
<feature type="disulfide bond" description="Redox-active" evidence="1">
    <location>
        <begin position="43"/>
        <end position="46"/>
    </location>
</feature>
<feature type="disulfide bond" description="Redox-active" evidence="1">
    <location>
        <begin position="107"/>
        <end position="133"/>
    </location>
</feature>
<evidence type="ECO:0000255" key="1">
    <source>
        <dbReference type="HAMAP-Rule" id="MF_00286"/>
    </source>
</evidence>
<protein>
    <recommendedName>
        <fullName evidence="1">Disulfide bond formation protein B</fullName>
    </recommendedName>
    <alternativeName>
        <fullName evidence="1">Disulfide oxidoreductase</fullName>
    </alternativeName>
</protein>
<gene>
    <name evidence="1" type="primary">dsbB</name>
    <name type="ordered locus">VC_1902</name>
</gene>